<reference key="1">
    <citation type="journal article" date="2011" name="Proc. Natl. Acad. Sci. U.S.A.">
        <title>Genomic anatomy of Escherichia coli O157:H7 outbreaks.</title>
        <authorList>
            <person name="Eppinger M."/>
            <person name="Mammel M.K."/>
            <person name="Leclerc J.E."/>
            <person name="Ravel J."/>
            <person name="Cebula T.A."/>
        </authorList>
    </citation>
    <scope>NUCLEOTIDE SEQUENCE [LARGE SCALE GENOMIC DNA]</scope>
    <source>
        <strain>EC4115 / EHEC</strain>
    </source>
</reference>
<feature type="chain" id="PRO_1000092171" description="Phosphoadenosine 5'-phosphosulfate reductase">
    <location>
        <begin position="1"/>
        <end position="244"/>
    </location>
</feature>
<feature type="active site" description="Nucleophile; cysteine thiosulfonate intermediate" evidence="1">
    <location>
        <position position="239"/>
    </location>
</feature>
<accession>B5Z3C5</accession>
<sequence>MSKLDLNALNELPKVDRILALAETNAQLEKLDAEGRVAWALDNLPGEYVLSSSFGIQAAVSLHLVNQIRPDIPVILTDTGYLFPETYRFIDELTDKLKLNLKVYRATESAAWQEARYGKLWEQGVEGIEKYNDINKVEPMNRALKELNAQTWFAGLRREQSGSRANLPVLAIQRGVFKVLPIIDWDNRTIYQYLQKNGLKYHPLWDEGYLSVGDTHTTRKWEPGMAEEETRFFGLKRECGLHEG</sequence>
<organism>
    <name type="scientific">Escherichia coli O157:H7 (strain EC4115 / EHEC)</name>
    <dbReference type="NCBI Taxonomy" id="444450"/>
    <lineage>
        <taxon>Bacteria</taxon>
        <taxon>Pseudomonadati</taxon>
        <taxon>Pseudomonadota</taxon>
        <taxon>Gammaproteobacteria</taxon>
        <taxon>Enterobacterales</taxon>
        <taxon>Enterobacteriaceae</taxon>
        <taxon>Escherichia</taxon>
    </lineage>
</organism>
<proteinExistence type="inferred from homology"/>
<protein>
    <recommendedName>
        <fullName evidence="1">Phosphoadenosine 5'-phosphosulfate reductase</fullName>
        <shortName evidence="1">PAPS reductase</shortName>
        <ecNumber evidence="1">1.8.4.8</ecNumber>
    </recommendedName>
    <alternativeName>
        <fullName evidence="1">3'-phosphoadenylylsulfate reductase</fullName>
    </alternativeName>
    <alternativeName>
        <fullName evidence="1">PAPS reductase, thioredoxin dependent</fullName>
    </alternativeName>
    <alternativeName>
        <fullName evidence="1">PAPS sulfotransferase</fullName>
    </alternativeName>
    <alternativeName>
        <fullName evidence="1">PAdoPS reductase</fullName>
    </alternativeName>
</protein>
<comment type="function">
    <text evidence="1">Catalyzes the formation of sulfite from phosphoadenosine 5'-phosphosulfate (PAPS) using thioredoxin as an electron donor.</text>
</comment>
<comment type="catalytic activity">
    <reaction evidence="1">
        <text>[thioredoxin]-disulfide + sulfite + adenosine 3',5'-bisphosphate + 2 H(+) = [thioredoxin]-dithiol + 3'-phosphoadenylyl sulfate</text>
        <dbReference type="Rhea" id="RHEA:11724"/>
        <dbReference type="Rhea" id="RHEA-COMP:10698"/>
        <dbReference type="Rhea" id="RHEA-COMP:10700"/>
        <dbReference type="ChEBI" id="CHEBI:15378"/>
        <dbReference type="ChEBI" id="CHEBI:17359"/>
        <dbReference type="ChEBI" id="CHEBI:29950"/>
        <dbReference type="ChEBI" id="CHEBI:50058"/>
        <dbReference type="ChEBI" id="CHEBI:58339"/>
        <dbReference type="ChEBI" id="CHEBI:58343"/>
        <dbReference type="EC" id="1.8.4.8"/>
    </reaction>
</comment>
<comment type="pathway">
    <text evidence="1">Sulfur metabolism; hydrogen sulfide biosynthesis; sulfite from sulfate: step 3/3.</text>
</comment>
<comment type="subcellular location">
    <subcellularLocation>
        <location evidence="1">Cytoplasm</location>
    </subcellularLocation>
</comment>
<comment type="similarity">
    <text evidence="1">Belongs to the PAPS reductase family. CysH subfamily.</text>
</comment>
<keyword id="KW-0963">Cytoplasm</keyword>
<keyword id="KW-0560">Oxidoreductase</keyword>
<dbReference type="EC" id="1.8.4.8" evidence="1"/>
<dbReference type="EMBL" id="CP001164">
    <property type="protein sequence ID" value="ACI38487.1"/>
    <property type="molecule type" value="Genomic_DNA"/>
</dbReference>
<dbReference type="RefSeq" id="WP_000039864.1">
    <property type="nucleotide sequence ID" value="NC_011353.1"/>
</dbReference>
<dbReference type="SMR" id="B5Z3C5"/>
<dbReference type="KEGG" id="ecf:ECH74115_4016"/>
<dbReference type="HOGENOM" id="CLU_044089_3_0_6"/>
<dbReference type="UniPathway" id="UPA00140">
    <property type="reaction ID" value="UER00206"/>
</dbReference>
<dbReference type="GO" id="GO:0005737">
    <property type="term" value="C:cytoplasm"/>
    <property type="evidence" value="ECO:0007669"/>
    <property type="project" value="UniProtKB-SubCell"/>
</dbReference>
<dbReference type="GO" id="GO:0004604">
    <property type="term" value="F:phosphoadenylyl-sulfate reductase (thioredoxin) activity"/>
    <property type="evidence" value="ECO:0007669"/>
    <property type="project" value="UniProtKB-UniRule"/>
</dbReference>
<dbReference type="GO" id="GO:0070814">
    <property type="term" value="P:hydrogen sulfide biosynthetic process"/>
    <property type="evidence" value="ECO:0007669"/>
    <property type="project" value="UniProtKB-UniRule"/>
</dbReference>
<dbReference type="GO" id="GO:0019379">
    <property type="term" value="P:sulfate assimilation, phosphoadenylyl sulfate reduction by phosphoadenylyl-sulfate reductase (thioredoxin)"/>
    <property type="evidence" value="ECO:0007669"/>
    <property type="project" value="UniProtKB-UniRule"/>
</dbReference>
<dbReference type="CDD" id="cd23945">
    <property type="entry name" value="PAPS_reductase"/>
    <property type="match status" value="1"/>
</dbReference>
<dbReference type="FunFam" id="3.40.50.620:FF:000043">
    <property type="entry name" value="Phosphoadenosine phosphosulfate reductase"/>
    <property type="match status" value="1"/>
</dbReference>
<dbReference type="Gene3D" id="3.40.50.620">
    <property type="entry name" value="HUPs"/>
    <property type="match status" value="1"/>
</dbReference>
<dbReference type="HAMAP" id="MF_00063">
    <property type="entry name" value="CysH"/>
    <property type="match status" value="1"/>
</dbReference>
<dbReference type="InterPro" id="IPR004511">
    <property type="entry name" value="PAPS/APS_Rdtase"/>
</dbReference>
<dbReference type="InterPro" id="IPR002500">
    <property type="entry name" value="PAPS_reduct_dom"/>
</dbReference>
<dbReference type="InterPro" id="IPR011800">
    <property type="entry name" value="PAPS_reductase_CysH"/>
</dbReference>
<dbReference type="InterPro" id="IPR014729">
    <property type="entry name" value="Rossmann-like_a/b/a_fold"/>
</dbReference>
<dbReference type="NCBIfam" id="TIGR00434">
    <property type="entry name" value="cysH"/>
    <property type="match status" value="1"/>
</dbReference>
<dbReference type="NCBIfam" id="TIGR02057">
    <property type="entry name" value="PAPS_reductase"/>
    <property type="match status" value="1"/>
</dbReference>
<dbReference type="NCBIfam" id="NF002537">
    <property type="entry name" value="PRK02090.1"/>
    <property type="match status" value="1"/>
</dbReference>
<dbReference type="PANTHER" id="PTHR46509">
    <property type="entry name" value="PHOSPHOADENOSINE PHOSPHOSULFATE REDUCTASE"/>
    <property type="match status" value="1"/>
</dbReference>
<dbReference type="PANTHER" id="PTHR46509:SF1">
    <property type="entry name" value="PHOSPHOADENOSINE PHOSPHOSULFATE REDUCTASE"/>
    <property type="match status" value="1"/>
</dbReference>
<dbReference type="Pfam" id="PF01507">
    <property type="entry name" value="PAPS_reduct"/>
    <property type="match status" value="1"/>
</dbReference>
<dbReference type="PIRSF" id="PIRSF000857">
    <property type="entry name" value="PAPS_reductase"/>
    <property type="match status" value="1"/>
</dbReference>
<dbReference type="SUPFAM" id="SSF52402">
    <property type="entry name" value="Adenine nucleotide alpha hydrolases-like"/>
    <property type="match status" value="1"/>
</dbReference>
<name>CYSH_ECO5E</name>
<gene>
    <name evidence="1" type="primary">cysH</name>
    <name type="ordered locus">ECH74115_4016</name>
</gene>
<evidence type="ECO:0000255" key="1">
    <source>
        <dbReference type="HAMAP-Rule" id="MF_00063"/>
    </source>
</evidence>